<accession>P16718</accession>
<proteinExistence type="inferred from homology"/>
<comment type="function">
    <text evidence="1">Envelope protein required for virus entry into host cell and for cell-cell fusion (syncytium formation).</text>
</comment>
<comment type="subcellular location">
    <subcellularLocation>
        <location evidence="3">Virion membrane</location>
        <topology evidence="3">Single-pass type II membrane protein</topology>
    </subcellularLocation>
    <text evidence="1">Component of the intracellular mature virion (IMV) membrane.</text>
</comment>
<comment type="PTM">
    <text evidence="1">Contains two intramolecular disulfide bonds. They are created by the viral disulfide bond formation pathway, a poxvirus-specific pathway that operates on the cytoplasmic side of the MV membranes (By similarity).</text>
</comment>
<comment type="similarity">
    <text evidence="3">Belongs to the poxviridae A28 protein family.</text>
</comment>
<reference key="1">
    <citation type="journal article" date="1989" name="J. Virol.">
        <title>A comparison of the genome organization of capripoxvirus with that of the orthopoxviruses.</title>
        <authorList>
            <person name="Gershon P.D."/>
            <person name="Ansell D.M."/>
            <person name="Black D.N."/>
        </authorList>
    </citation>
    <scope>NUCLEOTIDE SEQUENCE [GENOMIC DNA]</scope>
</reference>
<dbReference type="EMBL" id="M30039">
    <property type="protein sequence ID" value="AAC32899.1"/>
    <property type="molecule type" value="Genomic_DNA"/>
</dbReference>
<dbReference type="PIR" id="C33325">
    <property type="entry name" value="WMVZM3"/>
</dbReference>
<dbReference type="RefSeq" id="NP_659690.1">
    <property type="nucleotide sequence ID" value="NC_004002.1"/>
</dbReference>
<dbReference type="SMR" id="P16718"/>
<dbReference type="KEGG" id="vg:944593"/>
<dbReference type="GO" id="GO:0016020">
    <property type="term" value="C:membrane"/>
    <property type="evidence" value="ECO:0007669"/>
    <property type="project" value="UniProtKB-KW"/>
</dbReference>
<dbReference type="GO" id="GO:0019031">
    <property type="term" value="C:viral envelope"/>
    <property type="evidence" value="ECO:0007669"/>
    <property type="project" value="UniProtKB-KW"/>
</dbReference>
<dbReference type="GO" id="GO:0055036">
    <property type="term" value="C:virion membrane"/>
    <property type="evidence" value="ECO:0007669"/>
    <property type="project" value="UniProtKB-SubCell"/>
</dbReference>
<dbReference type="GO" id="GO:0039663">
    <property type="term" value="P:membrane fusion involved in viral entry into host cell"/>
    <property type="evidence" value="ECO:0007669"/>
    <property type="project" value="UniProtKB-KW"/>
</dbReference>
<dbReference type="GO" id="GO:0046718">
    <property type="term" value="P:symbiont entry into host cell"/>
    <property type="evidence" value="ECO:0007669"/>
    <property type="project" value="UniProtKB-KW"/>
</dbReference>
<dbReference type="InterPro" id="IPR007664">
    <property type="entry name" value="Poxvirus_A28"/>
</dbReference>
<dbReference type="Pfam" id="PF04584">
    <property type="entry name" value="Pox_A28"/>
    <property type="match status" value="1"/>
</dbReference>
<organismHost>
    <name type="scientific">Ovis aries</name>
    <name type="common">Sheep</name>
    <dbReference type="NCBI Taxonomy" id="9940"/>
</organismHost>
<gene>
    <name type="ORF">HM3</name>
</gene>
<evidence type="ECO:0000250" key="1"/>
<evidence type="ECO:0000255" key="2"/>
<evidence type="ECO:0000305" key="3"/>
<keyword id="KW-1015">Disulfide bond</keyword>
<keyword id="KW-1168">Fusion of virus membrane with host membrane</keyword>
<keyword id="KW-0426">Late protein</keyword>
<keyword id="KW-0472">Membrane</keyword>
<keyword id="KW-0735">Signal-anchor</keyword>
<keyword id="KW-0812">Transmembrane</keyword>
<keyword id="KW-1133">Transmembrane helix</keyword>
<keyword id="KW-0261">Viral envelope protein</keyword>
<keyword id="KW-1162">Viral penetration into host cytoplasm</keyword>
<keyword id="KW-0946">Virion</keyword>
<keyword id="KW-1160">Virus entry into host cell</keyword>
<feature type="chain" id="PRO_0000099287" description="Envelope protein A28 homolog">
    <location>
        <begin position="1"/>
        <end position="140"/>
    </location>
</feature>
<feature type="transmembrane region" description="Helical; Signal-anchor for type II membrane protein" evidence="2">
    <location>
        <begin position="1"/>
        <end position="21"/>
    </location>
</feature>
<feature type="topological domain" description="Virion surface" evidence="2">
    <location>
        <begin position="22"/>
        <end position="140"/>
    </location>
</feature>
<organism>
    <name type="scientific">Sheeppox virus (strain KS-1)</name>
    <name type="common">SPPV</name>
    <name type="synonym">Capripoxvirus (strain KS-1)</name>
    <dbReference type="NCBI Taxonomy" id="10269"/>
    <lineage>
        <taxon>Viruses</taxon>
        <taxon>Varidnaviria</taxon>
        <taxon>Bamfordvirae</taxon>
        <taxon>Nucleocytoviricota</taxon>
        <taxon>Pokkesviricetes</taxon>
        <taxon>Chitovirales</taxon>
        <taxon>Poxviridae</taxon>
        <taxon>Chordopoxvirinae</taxon>
        <taxon>Capripoxvirus</taxon>
        <taxon>Sheeppox virus</taxon>
    </lineage>
</organism>
<protein>
    <recommendedName>
        <fullName>Envelope protein A28 homolog</fullName>
    </recommendedName>
    <alternativeName>
        <fullName>Protein HM3</fullName>
    </alternativeName>
</protein>
<sequence length="140" mass="16203">MNAITIFFIILSTVAVCIIIFQLYSIYLNYDNIKEFNSAHSAFEFSKSVNTLSLDRTIKDPNDDIYDPKQKWRCVKLDNDYVSVSMFGFKSNGSEIRKFKNLESCIDYTFSQSTHSDIKNPCILQNGIKSKECIFLKSMF</sequence>
<name>A28_SHEVK</name>